<name>MURA2_SYMTH</name>
<comment type="function">
    <text evidence="1">Cell wall formation. Adds enolpyruvyl to UDP-N-acetylglucosamine.</text>
</comment>
<comment type="catalytic activity">
    <reaction evidence="1">
        <text>phosphoenolpyruvate + UDP-N-acetyl-alpha-D-glucosamine = UDP-N-acetyl-3-O-(1-carboxyvinyl)-alpha-D-glucosamine + phosphate</text>
        <dbReference type="Rhea" id="RHEA:18681"/>
        <dbReference type="ChEBI" id="CHEBI:43474"/>
        <dbReference type="ChEBI" id="CHEBI:57705"/>
        <dbReference type="ChEBI" id="CHEBI:58702"/>
        <dbReference type="ChEBI" id="CHEBI:68483"/>
        <dbReference type="EC" id="2.5.1.7"/>
    </reaction>
</comment>
<comment type="pathway">
    <text evidence="1">Cell wall biogenesis; peptidoglycan biosynthesis.</text>
</comment>
<comment type="subcellular location">
    <subcellularLocation>
        <location evidence="1">Cytoplasm</location>
    </subcellularLocation>
</comment>
<comment type="similarity">
    <text evidence="1">Belongs to the EPSP synthase family. MurA subfamily.</text>
</comment>
<dbReference type="EC" id="2.5.1.7" evidence="1"/>
<dbReference type="EMBL" id="AP006840">
    <property type="protein sequence ID" value="BAD41898.1"/>
    <property type="molecule type" value="Genomic_DNA"/>
</dbReference>
<dbReference type="RefSeq" id="WP_011197032.1">
    <property type="nucleotide sequence ID" value="NC_006177.1"/>
</dbReference>
<dbReference type="SMR" id="Q67KA0"/>
<dbReference type="STRING" id="292459.STH2915"/>
<dbReference type="KEGG" id="sth:STH2915"/>
<dbReference type="eggNOG" id="COG0766">
    <property type="taxonomic scope" value="Bacteria"/>
</dbReference>
<dbReference type="HOGENOM" id="CLU_027387_0_0_9"/>
<dbReference type="OrthoDB" id="9803760at2"/>
<dbReference type="UniPathway" id="UPA00219"/>
<dbReference type="Proteomes" id="UP000000417">
    <property type="component" value="Chromosome"/>
</dbReference>
<dbReference type="GO" id="GO:0005737">
    <property type="term" value="C:cytoplasm"/>
    <property type="evidence" value="ECO:0007669"/>
    <property type="project" value="UniProtKB-SubCell"/>
</dbReference>
<dbReference type="GO" id="GO:0008760">
    <property type="term" value="F:UDP-N-acetylglucosamine 1-carboxyvinyltransferase activity"/>
    <property type="evidence" value="ECO:0007669"/>
    <property type="project" value="UniProtKB-UniRule"/>
</dbReference>
<dbReference type="GO" id="GO:0051301">
    <property type="term" value="P:cell division"/>
    <property type="evidence" value="ECO:0007669"/>
    <property type="project" value="UniProtKB-KW"/>
</dbReference>
<dbReference type="GO" id="GO:0071555">
    <property type="term" value="P:cell wall organization"/>
    <property type="evidence" value="ECO:0007669"/>
    <property type="project" value="UniProtKB-KW"/>
</dbReference>
<dbReference type="GO" id="GO:0009252">
    <property type="term" value="P:peptidoglycan biosynthetic process"/>
    <property type="evidence" value="ECO:0007669"/>
    <property type="project" value="UniProtKB-UniRule"/>
</dbReference>
<dbReference type="GO" id="GO:0008360">
    <property type="term" value="P:regulation of cell shape"/>
    <property type="evidence" value="ECO:0007669"/>
    <property type="project" value="UniProtKB-KW"/>
</dbReference>
<dbReference type="GO" id="GO:0019277">
    <property type="term" value="P:UDP-N-acetylgalactosamine biosynthetic process"/>
    <property type="evidence" value="ECO:0007669"/>
    <property type="project" value="InterPro"/>
</dbReference>
<dbReference type="CDD" id="cd01555">
    <property type="entry name" value="UdpNAET"/>
    <property type="match status" value="1"/>
</dbReference>
<dbReference type="Gene3D" id="3.65.10.10">
    <property type="entry name" value="Enolpyruvate transferase domain"/>
    <property type="match status" value="2"/>
</dbReference>
<dbReference type="HAMAP" id="MF_00111">
    <property type="entry name" value="MurA"/>
    <property type="match status" value="1"/>
</dbReference>
<dbReference type="InterPro" id="IPR001986">
    <property type="entry name" value="Enolpyruvate_Tfrase_dom"/>
</dbReference>
<dbReference type="InterPro" id="IPR036968">
    <property type="entry name" value="Enolpyruvate_Tfrase_sf"/>
</dbReference>
<dbReference type="InterPro" id="IPR050068">
    <property type="entry name" value="MurA_subfamily"/>
</dbReference>
<dbReference type="InterPro" id="IPR013792">
    <property type="entry name" value="RNA3'P_cycl/enolpyr_Trfase_a/b"/>
</dbReference>
<dbReference type="InterPro" id="IPR005750">
    <property type="entry name" value="UDP_GlcNAc_COvinyl_MurA"/>
</dbReference>
<dbReference type="NCBIfam" id="TIGR01072">
    <property type="entry name" value="murA"/>
    <property type="match status" value="1"/>
</dbReference>
<dbReference type="NCBIfam" id="NF006873">
    <property type="entry name" value="PRK09369.1"/>
    <property type="match status" value="1"/>
</dbReference>
<dbReference type="PANTHER" id="PTHR43783">
    <property type="entry name" value="UDP-N-ACETYLGLUCOSAMINE 1-CARBOXYVINYLTRANSFERASE"/>
    <property type="match status" value="1"/>
</dbReference>
<dbReference type="PANTHER" id="PTHR43783:SF1">
    <property type="entry name" value="UDP-N-ACETYLGLUCOSAMINE 1-CARBOXYVINYLTRANSFERASE"/>
    <property type="match status" value="1"/>
</dbReference>
<dbReference type="Pfam" id="PF00275">
    <property type="entry name" value="EPSP_synthase"/>
    <property type="match status" value="1"/>
</dbReference>
<dbReference type="SUPFAM" id="SSF55205">
    <property type="entry name" value="EPT/RTPC-like"/>
    <property type="match status" value="1"/>
</dbReference>
<reference key="1">
    <citation type="journal article" date="2004" name="Nucleic Acids Res.">
        <title>Genome sequence of Symbiobacterium thermophilum, an uncultivable bacterium that depends on microbial commensalism.</title>
        <authorList>
            <person name="Ueda K."/>
            <person name="Yamashita A."/>
            <person name="Ishikawa J."/>
            <person name="Shimada M."/>
            <person name="Watsuji T."/>
            <person name="Morimura K."/>
            <person name="Ikeda H."/>
            <person name="Hattori M."/>
            <person name="Beppu T."/>
        </authorList>
    </citation>
    <scope>NUCLEOTIDE SEQUENCE [LARGE SCALE GENOMIC DNA]</scope>
    <source>
        <strain>DSM 24528 / JCM 14929 / IAM 14863 / T</strain>
    </source>
</reference>
<proteinExistence type="inferred from homology"/>
<feature type="chain" id="PRO_0000231285" description="UDP-N-acetylglucosamine 1-carboxyvinyltransferase 2">
    <location>
        <begin position="1"/>
        <end position="423"/>
    </location>
</feature>
<feature type="active site" description="Proton donor" evidence="1">
    <location>
        <position position="119"/>
    </location>
</feature>
<feature type="binding site" evidence="1">
    <location>
        <begin position="23"/>
        <end position="24"/>
    </location>
    <ligand>
        <name>phosphoenolpyruvate</name>
        <dbReference type="ChEBI" id="CHEBI:58702"/>
    </ligand>
</feature>
<feature type="binding site" evidence="1">
    <location>
        <position position="95"/>
    </location>
    <ligand>
        <name>UDP-N-acetyl-alpha-D-glucosamine</name>
        <dbReference type="ChEBI" id="CHEBI:57705"/>
    </ligand>
</feature>
<feature type="binding site" evidence="1">
    <location>
        <position position="306"/>
    </location>
    <ligand>
        <name>UDP-N-acetyl-alpha-D-glucosamine</name>
        <dbReference type="ChEBI" id="CHEBI:57705"/>
    </ligand>
</feature>
<feature type="binding site" evidence="1">
    <location>
        <position position="328"/>
    </location>
    <ligand>
        <name>UDP-N-acetyl-alpha-D-glucosamine</name>
        <dbReference type="ChEBI" id="CHEBI:57705"/>
    </ligand>
</feature>
<feature type="modified residue" description="2-(S-cysteinyl)pyruvic acid O-phosphothioketal" evidence="1">
    <location>
        <position position="119"/>
    </location>
</feature>
<protein>
    <recommendedName>
        <fullName evidence="1">UDP-N-acetylglucosamine 1-carboxyvinyltransferase 2</fullName>
        <ecNumber evidence="1">2.5.1.7</ecNumber>
    </recommendedName>
    <alternativeName>
        <fullName evidence="1">Enoylpyruvate transferase 2</fullName>
    </alternativeName>
    <alternativeName>
        <fullName evidence="1">UDP-N-acetylglucosamine enolpyruvyl transferase 2</fullName>
        <shortName evidence="1">EPT 2</shortName>
    </alternativeName>
</protein>
<gene>
    <name evidence="1" type="primary">murA2</name>
    <name type="ordered locus">STH2915</name>
</gene>
<sequence>MTAKFVVRGGNRLSGTVTIGGAKNSALPIVTAAALAAEGESILENVPDNSDIQHLCEILRALGCRVERVAETTLRIQARELEHHVAPYHLARRLRGSTYVMGLLLARLGKGEVACPGGCEIGARPVDFHLKGFRALGAEVVVEHGAMVSRRVDLRGGRFYVDRASVGTTVNMIITASLAPGVTVLENAACEPEIVDLANFINAMGGRVRGAGTNTVRIEGVDRLRGARHEIIPDRIEAGTYMMMTAAAGGDVVVENVIPEHLGTVIAKLVEAGQEVEEHGDCIRVRARPIRAVDVETQVYPGFPTDLQSPWVALMGLADGISVVHETIFENRFGFTNELIRMGAKIKVDRNTGIIRGVKRYTGAPVEARDIRGGAALVTAALAAEGVTEVSGVQYIDRGYTRMEEKLAALGADIRRVPNGSEQ</sequence>
<keyword id="KW-0131">Cell cycle</keyword>
<keyword id="KW-0132">Cell division</keyword>
<keyword id="KW-0133">Cell shape</keyword>
<keyword id="KW-0961">Cell wall biogenesis/degradation</keyword>
<keyword id="KW-0963">Cytoplasm</keyword>
<keyword id="KW-0573">Peptidoglycan synthesis</keyword>
<keyword id="KW-0670">Pyruvate</keyword>
<keyword id="KW-1185">Reference proteome</keyword>
<keyword id="KW-0808">Transferase</keyword>
<organism>
    <name type="scientific">Symbiobacterium thermophilum (strain DSM 24528 / JCM 14929 / IAM 14863 / T)</name>
    <dbReference type="NCBI Taxonomy" id="292459"/>
    <lineage>
        <taxon>Bacteria</taxon>
        <taxon>Bacillati</taxon>
        <taxon>Bacillota</taxon>
        <taxon>Clostridia</taxon>
        <taxon>Eubacteriales</taxon>
        <taxon>Symbiobacteriaceae</taxon>
        <taxon>Symbiobacterium</taxon>
    </lineage>
</organism>
<accession>Q67KA0</accession>
<evidence type="ECO:0000255" key="1">
    <source>
        <dbReference type="HAMAP-Rule" id="MF_00111"/>
    </source>
</evidence>